<reference key="1">
    <citation type="journal article" date="2004" name="Nucleic Acids Res.">
        <title>Thermoadaptation trait revealed by the genome sequence of thermophilic Geobacillus kaustophilus.</title>
        <authorList>
            <person name="Takami H."/>
            <person name="Takaki Y."/>
            <person name="Chee G.-J."/>
            <person name="Nishi S."/>
            <person name="Shimamura S."/>
            <person name="Suzuki H."/>
            <person name="Matsui S."/>
            <person name="Uchiyama I."/>
        </authorList>
    </citation>
    <scope>NUCLEOTIDE SEQUENCE [LARGE SCALE GENOMIC DNA]</scope>
    <source>
        <strain>HTA426</strain>
    </source>
</reference>
<dbReference type="EC" id="2.8.1.4" evidence="1"/>
<dbReference type="EMBL" id="BA000043">
    <property type="protein sequence ID" value="BAD77080.1"/>
    <property type="molecule type" value="Genomic_DNA"/>
</dbReference>
<dbReference type="RefSeq" id="WP_011232269.1">
    <property type="nucleotide sequence ID" value="NC_006510.1"/>
</dbReference>
<dbReference type="SMR" id="Q5KW56"/>
<dbReference type="STRING" id="235909.GK2795"/>
<dbReference type="GeneID" id="32064689"/>
<dbReference type="KEGG" id="gka:GK2795"/>
<dbReference type="PATRIC" id="fig|235909.7.peg.2982"/>
<dbReference type="eggNOG" id="COG0301">
    <property type="taxonomic scope" value="Bacteria"/>
</dbReference>
<dbReference type="HOGENOM" id="CLU_037952_4_0_9"/>
<dbReference type="UniPathway" id="UPA00060"/>
<dbReference type="Proteomes" id="UP000001172">
    <property type="component" value="Chromosome"/>
</dbReference>
<dbReference type="GO" id="GO:0005829">
    <property type="term" value="C:cytosol"/>
    <property type="evidence" value="ECO:0007669"/>
    <property type="project" value="TreeGrafter"/>
</dbReference>
<dbReference type="GO" id="GO:0005524">
    <property type="term" value="F:ATP binding"/>
    <property type="evidence" value="ECO:0007669"/>
    <property type="project" value="UniProtKB-UniRule"/>
</dbReference>
<dbReference type="GO" id="GO:0004810">
    <property type="term" value="F:CCA tRNA nucleotidyltransferase activity"/>
    <property type="evidence" value="ECO:0007669"/>
    <property type="project" value="InterPro"/>
</dbReference>
<dbReference type="GO" id="GO:0000049">
    <property type="term" value="F:tRNA binding"/>
    <property type="evidence" value="ECO:0007669"/>
    <property type="project" value="UniProtKB-UniRule"/>
</dbReference>
<dbReference type="GO" id="GO:0140741">
    <property type="term" value="F:tRNA-uracil-4 sulfurtransferase activity"/>
    <property type="evidence" value="ECO:0007669"/>
    <property type="project" value="UniProtKB-EC"/>
</dbReference>
<dbReference type="GO" id="GO:0009228">
    <property type="term" value="P:thiamine biosynthetic process"/>
    <property type="evidence" value="ECO:0007669"/>
    <property type="project" value="UniProtKB-KW"/>
</dbReference>
<dbReference type="GO" id="GO:0009229">
    <property type="term" value="P:thiamine diphosphate biosynthetic process"/>
    <property type="evidence" value="ECO:0007669"/>
    <property type="project" value="UniProtKB-UniRule"/>
</dbReference>
<dbReference type="GO" id="GO:0052837">
    <property type="term" value="P:thiazole biosynthetic process"/>
    <property type="evidence" value="ECO:0007669"/>
    <property type="project" value="TreeGrafter"/>
</dbReference>
<dbReference type="GO" id="GO:0002937">
    <property type="term" value="P:tRNA 4-thiouridine biosynthesis"/>
    <property type="evidence" value="ECO:0007669"/>
    <property type="project" value="TreeGrafter"/>
</dbReference>
<dbReference type="CDD" id="cd01712">
    <property type="entry name" value="PPase_ThiI"/>
    <property type="match status" value="1"/>
</dbReference>
<dbReference type="CDD" id="cd11716">
    <property type="entry name" value="THUMP_ThiI"/>
    <property type="match status" value="1"/>
</dbReference>
<dbReference type="FunFam" id="3.40.50.620:FF:000053">
    <property type="entry name" value="Probable tRNA sulfurtransferase"/>
    <property type="match status" value="1"/>
</dbReference>
<dbReference type="Gene3D" id="3.30.2130.30">
    <property type="match status" value="1"/>
</dbReference>
<dbReference type="Gene3D" id="3.40.50.620">
    <property type="entry name" value="HUPs"/>
    <property type="match status" value="1"/>
</dbReference>
<dbReference type="HAMAP" id="MF_00021">
    <property type="entry name" value="ThiI"/>
    <property type="match status" value="1"/>
</dbReference>
<dbReference type="InterPro" id="IPR014729">
    <property type="entry name" value="Rossmann-like_a/b/a_fold"/>
</dbReference>
<dbReference type="InterPro" id="IPR020536">
    <property type="entry name" value="ThiI_AANH"/>
</dbReference>
<dbReference type="InterPro" id="IPR054173">
    <property type="entry name" value="ThiI_fer"/>
</dbReference>
<dbReference type="InterPro" id="IPR049961">
    <property type="entry name" value="ThiI_N"/>
</dbReference>
<dbReference type="InterPro" id="IPR004114">
    <property type="entry name" value="THUMP_dom"/>
</dbReference>
<dbReference type="InterPro" id="IPR049962">
    <property type="entry name" value="THUMP_ThiI"/>
</dbReference>
<dbReference type="InterPro" id="IPR003720">
    <property type="entry name" value="tRNA_STrfase"/>
</dbReference>
<dbReference type="InterPro" id="IPR050102">
    <property type="entry name" value="tRNA_sulfurtransferase_ThiI"/>
</dbReference>
<dbReference type="NCBIfam" id="TIGR00342">
    <property type="entry name" value="tRNA uracil 4-sulfurtransferase ThiI"/>
    <property type="match status" value="1"/>
</dbReference>
<dbReference type="PANTHER" id="PTHR43209">
    <property type="entry name" value="TRNA SULFURTRANSFERASE"/>
    <property type="match status" value="1"/>
</dbReference>
<dbReference type="PANTHER" id="PTHR43209:SF1">
    <property type="entry name" value="TRNA SULFURTRANSFERASE"/>
    <property type="match status" value="1"/>
</dbReference>
<dbReference type="Pfam" id="PF02568">
    <property type="entry name" value="ThiI"/>
    <property type="match status" value="1"/>
</dbReference>
<dbReference type="Pfam" id="PF22025">
    <property type="entry name" value="ThiI_fer"/>
    <property type="match status" value="1"/>
</dbReference>
<dbReference type="Pfam" id="PF02926">
    <property type="entry name" value="THUMP"/>
    <property type="match status" value="1"/>
</dbReference>
<dbReference type="SMART" id="SM00981">
    <property type="entry name" value="THUMP"/>
    <property type="match status" value="1"/>
</dbReference>
<dbReference type="SUPFAM" id="SSF52402">
    <property type="entry name" value="Adenine nucleotide alpha hydrolases-like"/>
    <property type="match status" value="1"/>
</dbReference>
<dbReference type="SUPFAM" id="SSF143437">
    <property type="entry name" value="THUMP domain-like"/>
    <property type="match status" value="1"/>
</dbReference>
<dbReference type="PROSITE" id="PS51165">
    <property type="entry name" value="THUMP"/>
    <property type="match status" value="1"/>
</dbReference>
<feature type="chain" id="PRO_1000074225" description="Probable tRNA sulfurtransferase">
    <location>
        <begin position="1"/>
        <end position="401"/>
    </location>
</feature>
<feature type="domain" description="THUMP" evidence="1">
    <location>
        <begin position="60"/>
        <end position="165"/>
    </location>
</feature>
<feature type="binding site" evidence="1">
    <location>
        <begin position="183"/>
        <end position="184"/>
    </location>
    <ligand>
        <name>ATP</name>
        <dbReference type="ChEBI" id="CHEBI:30616"/>
    </ligand>
</feature>
<feature type="binding site" evidence="1">
    <location>
        <begin position="208"/>
        <end position="209"/>
    </location>
    <ligand>
        <name>ATP</name>
        <dbReference type="ChEBI" id="CHEBI:30616"/>
    </ligand>
</feature>
<feature type="binding site" evidence="1">
    <location>
        <position position="265"/>
    </location>
    <ligand>
        <name>ATP</name>
        <dbReference type="ChEBI" id="CHEBI:30616"/>
    </ligand>
</feature>
<feature type="binding site" evidence="1">
    <location>
        <position position="287"/>
    </location>
    <ligand>
        <name>ATP</name>
        <dbReference type="ChEBI" id="CHEBI:30616"/>
    </ligand>
</feature>
<feature type="binding site" evidence="1">
    <location>
        <position position="296"/>
    </location>
    <ligand>
        <name>ATP</name>
        <dbReference type="ChEBI" id="CHEBI:30616"/>
    </ligand>
</feature>
<sequence>MNYDRILIRYGEMTTKGKNRNIFVRRLKNNIARKLQAFERIQIEYMRDRMYILLNGEPHEPIIEKLKTVFGIHSFSLAMKCENDLDAIKETALAAVRQLPYKGKTFKVSARRVDKQFPYRSDELNYEVGAHILRQTDGLRVNVREPDIDVRIEVRQDGTYVTCRDIFGAGGLPVGTSGKAMLMLSGGIDSPVAGYLAMKRGLEIEAVHFFSPPFTSERAKQKVIDLVRKLTTYGGRIKLHIVPFTEVQQAIYQGVPNEYSLISTRRAMLRITDALRRRQRALAIVTGESLGQVASQTLESMYVINEVTNTPILRPLVSMDKLEIIELAKQIGTHDISILPYEDCCTIFTPRAPKTKPKKEKVFHYESQLDLAPLLEKAVNDTETLVIDEETGQGDEFAELF</sequence>
<proteinExistence type="inferred from homology"/>
<name>THII_GEOKA</name>
<accession>Q5KW56</accession>
<keyword id="KW-0067">ATP-binding</keyword>
<keyword id="KW-0963">Cytoplasm</keyword>
<keyword id="KW-0547">Nucleotide-binding</keyword>
<keyword id="KW-1185">Reference proteome</keyword>
<keyword id="KW-0694">RNA-binding</keyword>
<keyword id="KW-0784">Thiamine biosynthesis</keyword>
<keyword id="KW-0808">Transferase</keyword>
<keyword id="KW-0820">tRNA-binding</keyword>
<gene>
    <name evidence="1" type="primary">thiI</name>
    <name type="ordered locus">GK2795</name>
</gene>
<organism>
    <name type="scientific">Geobacillus kaustophilus (strain HTA426)</name>
    <dbReference type="NCBI Taxonomy" id="235909"/>
    <lineage>
        <taxon>Bacteria</taxon>
        <taxon>Bacillati</taxon>
        <taxon>Bacillota</taxon>
        <taxon>Bacilli</taxon>
        <taxon>Bacillales</taxon>
        <taxon>Anoxybacillaceae</taxon>
        <taxon>Geobacillus</taxon>
        <taxon>Geobacillus thermoleovorans group</taxon>
    </lineage>
</organism>
<comment type="function">
    <text evidence="1">Catalyzes the ATP-dependent transfer of a sulfur to tRNA to produce 4-thiouridine in position 8 of tRNAs, which functions as a near-UV photosensor. Also catalyzes the transfer of sulfur to the sulfur carrier protein ThiS, forming ThiS-thiocarboxylate. This is a step in the synthesis of thiazole, in the thiamine biosynthesis pathway. The sulfur is donated as persulfide by IscS.</text>
</comment>
<comment type="catalytic activity">
    <reaction evidence="1">
        <text>[ThiI sulfur-carrier protein]-S-sulfanyl-L-cysteine + a uridine in tRNA + 2 reduced [2Fe-2S]-[ferredoxin] + ATP + H(+) = [ThiI sulfur-carrier protein]-L-cysteine + a 4-thiouridine in tRNA + 2 oxidized [2Fe-2S]-[ferredoxin] + AMP + diphosphate</text>
        <dbReference type="Rhea" id="RHEA:24176"/>
        <dbReference type="Rhea" id="RHEA-COMP:10000"/>
        <dbReference type="Rhea" id="RHEA-COMP:10001"/>
        <dbReference type="Rhea" id="RHEA-COMP:13337"/>
        <dbReference type="Rhea" id="RHEA-COMP:13338"/>
        <dbReference type="Rhea" id="RHEA-COMP:13339"/>
        <dbReference type="Rhea" id="RHEA-COMP:13340"/>
        <dbReference type="ChEBI" id="CHEBI:15378"/>
        <dbReference type="ChEBI" id="CHEBI:29950"/>
        <dbReference type="ChEBI" id="CHEBI:30616"/>
        <dbReference type="ChEBI" id="CHEBI:33019"/>
        <dbReference type="ChEBI" id="CHEBI:33737"/>
        <dbReference type="ChEBI" id="CHEBI:33738"/>
        <dbReference type="ChEBI" id="CHEBI:61963"/>
        <dbReference type="ChEBI" id="CHEBI:65315"/>
        <dbReference type="ChEBI" id="CHEBI:136798"/>
        <dbReference type="ChEBI" id="CHEBI:456215"/>
        <dbReference type="EC" id="2.8.1.4"/>
    </reaction>
</comment>
<comment type="catalytic activity">
    <reaction evidence="1">
        <text>[ThiS sulfur-carrier protein]-C-terminal Gly-Gly-AMP + S-sulfanyl-L-cysteinyl-[cysteine desulfurase] + AH2 = [ThiS sulfur-carrier protein]-C-terminal-Gly-aminoethanethioate + L-cysteinyl-[cysteine desulfurase] + A + AMP + 2 H(+)</text>
        <dbReference type="Rhea" id="RHEA:43340"/>
        <dbReference type="Rhea" id="RHEA-COMP:12157"/>
        <dbReference type="Rhea" id="RHEA-COMP:12158"/>
        <dbReference type="Rhea" id="RHEA-COMP:12910"/>
        <dbReference type="Rhea" id="RHEA-COMP:19908"/>
        <dbReference type="ChEBI" id="CHEBI:13193"/>
        <dbReference type="ChEBI" id="CHEBI:15378"/>
        <dbReference type="ChEBI" id="CHEBI:17499"/>
        <dbReference type="ChEBI" id="CHEBI:29950"/>
        <dbReference type="ChEBI" id="CHEBI:61963"/>
        <dbReference type="ChEBI" id="CHEBI:90618"/>
        <dbReference type="ChEBI" id="CHEBI:232372"/>
        <dbReference type="ChEBI" id="CHEBI:456215"/>
    </reaction>
</comment>
<comment type="pathway">
    <text evidence="1">Cofactor biosynthesis; thiamine diphosphate biosynthesis.</text>
</comment>
<comment type="subcellular location">
    <subcellularLocation>
        <location evidence="1">Cytoplasm</location>
    </subcellularLocation>
</comment>
<comment type="similarity">
    <text evidence="1">Belongs to the ThiI family.</text>
</comment>
<evidence type="ECO:0000255" key="1">
    <source>
        <dbReference type="HAMAP-Rule" id="MF_00021"/>
    </source>
</evidence>
<protein>
    <recommendedName>
        <fullName evidence="1">Probable tRNA sulfurtransferase</fullName>
        <ecNumber evidence="1">2.8.1.4</ecNumber>
    </recommendedName>
    <alternativeName>
        <fullName evidence="1">Sulfur carrier protein ThiS sulfurtransferase</fullName>
    </alternativeName>
    <alternativeName>
        <fullName evidence="1">Thiamine biosynthesis protein ThiI</fullName>
    </alternativeName>
    <alternativeName>
        <fullName evidence="1">tRNA 4-thiouridine synthase</fullName>
    </alternativeName>
</protein>